<sequence length="449" mass="51902">MELETHLSKYFTLAFTHKSMSLEMREKLAINSNATLKEFLQTIKNHCPNIKECMVLSTCNRFEIYASLKHGANTNEQKNALLKILAQNKKMSVSDLEKCVLMNTDESAVHHVFSVCSSLDSLVVGETQITGQMKNAYKFAFEEKFCSKDLTRLLHFAFKCAAKVRNLTGISKQGVSISSVAVKEALNIFEKERIKDKKALVIGLGEMAQLVIKHLLNKQFEALILGRNAAKFEDFIKELEEPKKVSFQNIENLNAYINEYELLFCATSSPHFIVQNRMLKETIFRRFWFDLAVPRNIEKPVLDNIFLYSVDDLEPMVRENVENRQESRMRAYEIVGLATMEFYQWIQSLEVEPVIKDLRELARISAQKELQKALKKRYVPKEYENNIEKILHNAFNTFLHNPTIALKKNAQKEESDVLVGAIKNLFNLDKSNANHAQNLNLYKCEYYEE</sequence>
<comment type="function">
    <text evidence="1">Catalyzes the NADPH-dependent reduction of glutamyl-tRNA(Glu) to glutamate 1-semialdehyde (GSA).</text>
</comment>
<comment type="catalytic activity">
    <reaction evidence="1">
        <text>(S)-4-amino-5-oxopentanoate + tRNA(Glu) + NADP(+) = L-glutamyl-tRNA(Glu) + NADPH + H(+)</text>
        <dbReference type="Rhea" id="RHEA:12344"/>
        <dbReference type="Rhea" id="RHEA-COMP:9663"/>
        <dbReference type="Rhea" id="RHEA-COMP:9680"/>
        <dbReference type="ChEBI" id="CHEBI:15378"/>
        <dbReference type="ChEBI" id="CHEBI:57501"/>
        <dbReference type="ChEBI" id="CHEBI:57783"/>
        <dbReference type="ChEBI" id="CHEBI:58349"/>
        <dbReference type="ChEBI" id="CHEBI:78442"/>
        <dbReference type="ChEBI" id="CHEBI:78520"/>
        <dbReference type="EC" id="1.2.1.70"/>
    </reaction>
</comment>
<comment type="pathway">
    <text evidence="1">Porphyrin-containing compound metabolism; protoporphyrin-IX biosynthesis; 5-aminolevulinate from L-glutamyl-tRNA(Glu): step 1/2.</text>
</comment>
<comment type="subunit">
    <text evidence="1">Homodimer.</text>
</comment>
<comment type="domain">
    <text evidence="1">Possesses an unusual extended V-shaped dimeric structure with each monomer consisting of three distinct domains arranged along a curved 'spinal' alpha-helix. The N-terminal catalytic domain specifically recognizes the glutamate moiety of the substrate. The second domain is the NADPH-binding domain, and the third C-terminal domain is responsible for dimerization.</text>
</comment>
<comment type="miscellaneous">
    <text evidence="1">During catalysis, the active site Cys acts as a nucleophile attacking the alpha-carbonyl group of tRNA-bound glutamate with the formation of a thioester intermediate between enzyme and glutamate, and the concomitant release of tRNA(Glu). The thioester intermediate is finally reduced by direct hydride transfer from NADPH, to form the product GSA.</text>
</comment>
<comment type="similarity">
    <text evidence="1">Belongs to the glutamyl-tRNA reductase family.</text>
</comment>
<name>HEM1_HELPY</name>
<protein>
    <recommendedName>
        <fullName evidence="1">Glutamyl-tRNA reductase</fullName>
        <shortName evidence="1">GluTR</shortName>
        <ecNumber evidence="1">1.2.1.70</ecNumber>
    </recommendedName>
</protein>
<dbReference type="EC" id="1.2.1.70" evidence="1"/>
<dbReference type="EMBL" id="AE000511">
    <property type="protein sequence ID" value="AAD07306.1"/>
    <property type="molecule type" value="Genomic_DNA"/>
</dbReference>
<dbReference type="PIR" id="G64549">
    <property type="entry name" value="G64549"/>
</dbReference>
<dbReference type="RefSeq" id="NP_207037.1">
    <property type="nucleotide sequence ID" value="NC_000915.1"/>
</dbReference>
<dbReference type="RefSeq" id="WP_000418286.1">
    <property type="nucleotide sequence ID" value="NC_018939.1"/>
</dbReference>
<dbReference type="SMR" id="P56125"/>
<dbReference type="FunCoup" id="P56125">
    <property type="interactions" value="267"/>
</dbReference>
<dbReference type="STRING" id="85962.HP_0239"/>
<dbReference type="PaxDb" id="85962-C694_01210"/>
<dbReference type="EnsemblBacteria" id="AAD07306">
    <property type="protein sequence ID" value="AAD07306"/>
    <property type="gene ID" value="HP_0239"/>
</dbReference>
<dbReference type="KEGG" id="heo:C694_01210"/>
<dbReference type="KEGG" id="hpy:HP_0239"/>
<dbReference type="PATRIC" id="fig|85962.47.peg.259"/>
<dbReference type="eggNOG" id="COG0373">
    <property type="taxonomic scope" value="Bacteria"/>
</dbReference>
<dbReference type="InParanoid" id="P56125"/>
<dbReference type="OrthoDB" id="110209at2"/>
<dbReference type="PhylomeDB" id="P56125"/>
<dbReference type="UniPathway" id="UPA00251">
    <property type="reaction ID" value="UER00316"/>
</dbReference>
<dbReference type="Proteomes" id="UP000000429">
    <property type="component" value="Chromosome"/>
</dbReference>
<dbReference type="GO" id="GO:0008883">
    <property type="term" value="F:glutamyl-tRNA reductase activity"/>
    <property type="evidence" value="ECO:0007669"/>
    <property type="project" value="UniProtKB-UniRule"/>
</dbReference>
<dbReference type="GO" id="GO:0050661">
    <property type="term" value="F:NADP binding"/>
    <property type="evidence" value="ECO:0007669"/>
    <property type="project" value="InterPro"/>
</dbReference>
<dbReference type="GO" id="GO:0006782">
    <property type="term" value="P:protoporphyrinogen IX biosynthetic process"/>
    <property type="evidence" value="ECO:0007669"/>
    <property type="project" value="UniProtKB-UniRule"/>
</dbReference>
<dbReference type="CDD" id="cd05213">
    <property type="entry name" value="NAD_bind_Glutamyl_tRNA_reduct"/>
    <property type="match status" value="1"/>
</dbReference>
<dbReference type="FunFam" id="3.30.460.30:FF:000001">
    <property type="entry name" value="Glutamyl-tRNA reductase"/>
    <property type="match status" value="1"/>
</dbReference>
<dbReference type="Gene3D" id="3.30.460.30">
    <property type="entry name" value="Glutamyl-tRNA reductase, N-terminal domain"/>
    <property type="match status" value="1"/>
</dbReference>
<dbReference type="Gene3D" id="3.40.50.720">
    <property type="entry name" value="NAD(P)-binding Rossmann-like Domain"/>
    <property type="match status" value="1"/>
</dbReference>
<dbReference type="HAMAP" id="MF_00087">
    <property type="entry name" value="Glu_tRNA_reductase"/>
    <property type="match status" value="1"/>
</dbReference>
<dbReference type="InterPro" id="IPR000343">
    <property type="entry name" value="4pyrrol_synth_GluRdtase"/>
</dbReference>
<dbReference type="InterPro" id="IPR015896">
    <property type="entry name" value="4pyrrol_synth_GluRdtase_dimer"/>
</dbReference>
<dbReference type="InterPro" id="IPR015895">
    <property type="entry name" value="4pyrrol_synth_GluRdtase_N"/>
</dbReference>
<dbReference type="InterPro" id="IPR018214">
    <property type="entry name" value="GluRdtase_CS"/>
</dbReference>
<dbReference type="InterPro" id="IPR036453">
    <property type="entry name" value="GluRdtase_dimer_dom_sf"/>
</dbReference>
<dbReference type="InterPro" id="IPR036343">
    <property type="entry name" value="GluRdtase_N_sf"/>
</dbReference>
<dbReference type="InterPro" id="IPR036291">
    <property type="entry name" value="NAD(P)-bd_dom_sf"/>
</dbReference>
<dbReference type="InterPro" id="IPR006151">
    <property type="entry name" value="Shikm_DH/Glu-tRNA_Rdtase"/>
</dbReference>
<dbReference type="NCBIfam" id="TIGR01035">
    <property type="entry name" value="hemA"/>
    <property type="match status" value="1"/>
</dbReference>
<dbReference type="PANTHER" id="PTHR43120">
    <property type="entry name" value="GLUTAMYL-TRNA REDUCTASE 1, CHLOROPLASTIC"/>
    <property type="match status" value="1"/>
</dbReference>
<dbReference type="PANTHER" id="PTHR43120:SF1">
    <property type="entry name" value="GLUTAMYL-TRNA REDUCTASE 1, CHLOROPLASTIC"/>
    <property type="match status" value="1"/>
</dbReference>
<dbReference type="Pfam" id="PF00745">
    <property type="entry name" value="GlutR_dimer"/>
    <property type="match status" value="1"/>
</dbReference>
<dbReference type="Pfam" id="PF05201">
    <property type="entry name" value="GlutR_N"/>
    <property type="match status" value="1"/>
</dbReference>
<dbReference type="Pfam" id="PF01488">
    <property type="entry name" value="Shikimate_DH"/>
    <property type="match status" value="1"/>
</dbReference>
<dbReference type="PIRSF" id="PIRSF000445">
    <property type="entry name" value="4pyrrol_synth_GluRdtase"/>
    <property type="match status" value="1"/>
</dbReference>
<dbReference type="SUPFAM" id="SSF69742">
    <property type="entry name" value="Glutamyl tRNA-reductase catalytic, N-terminal domain"/>
    <property type="match status" value="1"/>
</dbReference>
<dbReference type="SUPFAM" id="SSF69075">
    <property type="entry name" value="Glutamyl tRNA-reductase dimerization domain"/>
    <property type="match status" value="1"/>
</dbReference>
<dbReference type="SUPFAM" id="SSF51735">
    <property type="entry name" value="NAD(P)-binding Rossmann-fold domains"/>
    <property type="match status" value="1"/>
</dbReference>
<dbReference type="PROSITE" id="PS00747">
    <property type="entry name" value="GLUTR"/>
    <property type="match status" value="1"/>
</dbReference>
<keyword id="KW-0521">NADP</keyword>
<keyword id="KW-0560">Oxidoreductase</keyword>
<keyword id="KW-0627">Porphyrin biosynthesis</keyword>
<keyword id="KW-1185">Reference proteome</keyword>
<reference key="1">
    <citation type="journal article" date="1997" name="Nature">
        <title>The complete genome sequence of the gastric pathogen Helicobacter pylori.</title>
        <authorList>
            <person name="Tomb J.-F."/>
            <person name="White O."/>
            <person name="Kerlavage A.R."/>
            <person name="Clayton R.A."/>
            <person name="Sutton G.G."/>
            <person name="Fleischmann R.D."/>
            <person name="Ketchum K.A."/>
            <person name="Klenk H.-P."/>
            <person name="Gill S.R."/>
            <person name="Dougherty B.A."/>
            <person name="Nelson K.E."/>
            <person name="Quackenbush J."/>
            <person name="Zhou L."/>
            <person name="Kirkness E.F."/>
            <person name="Peterson S.N."/>
            <person name="Loftus B.J."/>
            <person name="Richardson D.L."/>
            <person name="Dodson R.J."/>
            <person name="Khalak H.G."/>
            <person name="Glodek A."/>
            <person name="McKenney K."/>
            <person name="FitzGerald L.M."/>
            <person name="Lee N."/>
            <person name="Adams M.D."/>
            <person name="Hickey E.K."/>
            <person name="Berg D.E."/>
            <person name="Gocayne J.D."/>
            <person name="Utterback T.R."/>
            <person name="Peterson J.D."/>
            <person name="Kelley J.M."/>
            <person name="Cotton M.D."/>
            <person name="Weidman J.F."/>
            <person name="Fujii C."/>
            <person name="Bowman C."/>
            <person name="Watthey L."/>
            <person name="Wallin E."/>
            <person name="Hayes W.S."/>
            <person name="Borodovsky M."/>
            <person name="Karp P.D."/>
            <person name="Smith H.O."/>
            <person name="Fraser C.M."/>
            <person name="Venter J.C."/>
        </authorList>
    </citation>
    <scope>NUCLEOTIDE SEQUENCE [LARGE SCALE GENOMIC DNA]</scope>
    <source>
        <strain>ATCC 700392 / 26695</strain>
    </source>
</reference>
<organism>
    <name type="scientific">Helicobacter pylori (strain ATCC 700392 / 26695)</name>
    <name type="common">Campylobacter pylori</name>
    <dbReference type="NCBI Taxonomy" id="85962"/>
    <lineage>
        <taxon>Bacteria</taxon>
        <taxon>Pseudomonadati</taxon>
        <taxon>Campylobacterota</taxon>
        <taxon>Epsilonproteobacteria</taxon>
        <taxon>Campylobacterales</taxon>
        <taxon>Helicobacteraceae</taxon>
        <taxon>Helicobacter</taxon>
    </lineage>
</organism>
<evidence type="ECO:0000255" key="1">
    <source>
        <dbReference type="HAMAP-Rule" id="MF_00087"/>
    </source>
</evidence>
<proteinExistence type="inferred from homology"/>
<gene>
    <name evidence="1" type="primary">hemA</name>
    <name type="ordered locus">HP_0239</name>
</gene>
<feature type="chain" id="PRO_0000114032" description="Glutamyl-tRNA reductase">
    <location>
        <begin position="1"/>
        <end position="449"/>
    </location>
</feature>
<feature type="active site" description="Nucleophile" evidence="1">
    <location>
        <position position="59"/>
    </location>
</feature>
<feature type="binding site" evidence="1">
    <location>
        <begin position="58"/>
        <end position="61"/>
    </location>
    <ligand>
        <name>substrate</name>
    </ligand>
</feature>
<feature type="binding site" evidence="1">
    <location>
        <position position="121"/>
    </location>
    <ligand>
        <name>substrate</name>
    </ligand>
</feature>
<feature type="binding site" evidence="1">
    <location>
        <begin position="126"/>
        <end position="128"/>
    </location>
    <ligand>
        <name>substrate</name>
    </ligand>
</feature>
<feature type="binding site" evidence="1">
    <location>
        <position position="132"/>
    </location>
    <ligand>
        <name>substrate</name>
    </ligand>
</feature>
<feature type="binding site" evidence="1">
    <location>
        <begin position="203"/>
        <end position="208"/>
    </location>
    <ligand>
        <name>NADP(+)</name>
        <dbReference type="ChEBI" id="CHEBI:58349"/>
    </ligand>
</feature>
<feature type="site" description="Important for activity" evidence="1">
    <location>
        <position position="111"/>
    </location>
</feature>
<accession>P56125</accession>